<evidence type="ECO:0000255" key="1">
    <source>
        <dbReference type="HAMAP-Rule" id="MF_01393"/>
    </source>
</evidence>
<name>ATP6_THIDA</name>
<gene>
    <name evidence="1" type="primary">atpB</name>
    <name type="ordered locus">Tbd_2803</name>
</gene>
<proteinExistence type="inferred from homology"/>
<sequence>MATEYASSGEYIKHHLQNLTYGQHADGTWGFAHGAEEAKAMGFWAINVDSMLFSIGLGVLFLFLFRLAAKKATVGVPTGLQNFVEWVIEFIDTSVRGSFSHQNALVAPLALTVFMWVFLMNLMDLLPVDWLPYVATMAGIPYLKVVPSTDPNVTFGLSLSIFFLVLYYSVKMKGAGGFFSELAFQPFPKFLFPVNLLLEGVGLIAKPISLALRLFGNMYAGEMIFILIALMFGGGWVLALFGGALQWAWAVFHILIITLQAFIFMTLTIVYLDMAHAEHH</sequence>
<reference key="1">
    <citation type="journal article" date="2006" name="J. Bacteriol.">
        <title>The genome sequence of the obligately chemolithoautotrophic, facultatively anaerobic bacterium Thiobacillus denitrificans.</title>
        <authorList>
            <person name="Beller H.R."/>
            <person name="Chain P.S."/>
            <person name="Letain T.E."/>
            <person name="Chakicherla A."/>
            <person name="Larimer F.W."/>
            <person name="Richardson P.M."/>
            <person name="Coleman M.A."/>
            <person name="Wood A.P."/>
            <person name="Kelly D.P."/>
        </authorList>
    </citation>
    <scope>NUCLEOTIDE SEQUENCE [LARGE SCALE GENOMIC DNA]</scope>
    <source>
        <strain>ATCC 25259 / T1</strain>
    </source>
</reference>
<protein>
    <recommendedName>
        <fullName evidence="1">ATP synthase subunit a</fullName>
    </recommendedName>
    <alternativeName>
        <fullName evidence="1">ATP synthase F0 sector subunit a</fullName>
    </alternativeName>
    <alternativeName>
        <fullName evidence="1">F-ATPase subunit 6</fullName>
    </alternativeName>
</protein>
<feature type="chain" id="PRO_0000362495" description="ATP synthase subunit a">
    <location>
        <begin position="1"/>
        <end position="280"/>
    </location>
</feature>
<feature type="transmembrane region" description="Helical" evidence="1">
    <location>
        <begin position="45"/>
        <end position="65"/>
    </location>
</feature>
<feature type="transmembrane region" description="Helical" evidence="1">
    <location>
        <begin position="105"/>
        <end position="125"/>
    </location>
</feature>
<feature type="transmembrane region" description="Helical" evidence="1">
    <location>
        <begin position="126"/>
        <end position="146"/>
    </location>
</feature>
<feature type="transmembrane region" description="Helical" evidence="1">
    <location>
        <begin position="159"/>
        <end position="179"/>
    </location>
</feature>
<feature type="transmembrane region" description="Helical" evidence="1">
    <location>
        <begin position="190"/>
        <end position="210"/>
    </location>
</feature>
<feature type="transmembrane region" description="Helical" evidence="1">
    <location>
        <begin position="223"/>
        <end position="243"/>
    </location>
</feature>
<feature type="transmembrane region" description="Helical" evidence="1">
    <location>
        <begin position="250"/>
        <end position="270"/>
    </location>
</feature>
<keyword id="KW-0066">ATP synthesis</keyword>
<keyword id="KW-0997">Cell inner membrane</keyword>
<keyword id="KW-1003">Cell membrane</keyword>
<keyword id="KW-0138">CF(0)</keyword>
<keyword id="KW-0375">Hydrogen ion transport</keyword>
<keyword id="KW-0406">Ion transport</keyword>
<keyword id="KW-0472">Membrane</keyword>
<keyword id="KW-1185">Reference proteome</keyword>
<keyword id="KW-0812">Transmembrane</keyword>
<keyword id="KW-1133">Transmembrane helix</keyword>
<keyword id="KW-0813">Transport</keyword>
<accession>Q3SF60</accession>
<organism>
    <name type="scientific">Thiobacillus denitrificans (strain ATCC 25259 / T1)</name>
    <dbReference type="NCBI Taxonomy" id="292415"/>
    <lineage>
        <taxon>Bacteria</taxon>
        <taxon>Pseudomonadati</taxon>
        <taxon>Pseudomonadota</taxon>
        <taxon>Betaproteobacteria</taxon>
        <taxon>Nitrosomonadales</taxon>
        <taxon>Thiobacillaceae</taxon>
        <taxon>Thiobacillus</taxon>
    </lineage>
</organism>
<comment type="function">
    <text evidence="1">Key component of the proton channel; it plays a direct role in the translocation of protons across the membrane.</text>
</comment>
<comment type="subunit">
    <text evidence="1">F-type ATPases have 2 components, CF(1) - the catalytic core - and CF(0) - the membrane proton channel. CF(1) has five subunits: alpha(3), beta(3), gamma(1), delta(1), epsilon(1). CF(0) has three main subunits: a(1), b(2) and c(9-12). The alpha and beta chains form an alternating ring which encloses part of the gamma chain. CF(1) is attached to CF(0) by a central stalk formed by the gamma and epsilon chains, while a peripheral stalk is formed by the delta and b chains.</text>
</comment>
<comment type="subcellular location">
    <subcellularLocation>
        <location evidence="1">Cell inner membrane</location>
        <topology evidence="1">Multi-pass membrane protein</topology>
    </subcellularLocation>
</comment>
<comment type="similarity">
    <text evidence="1">Belongs to the ATPase A chain family.</text>
</comment>
<dbReference type="EMBL" id="CP000116">
    <property type="protein sequence ID" value="AAZ98756.1"/>
    <property type="molecule type" value="Genomic_DNA"/>
</dbReference>
<dbReference type="RefSeq" id="WP_011313315.1">
    <property type="nucleotide sequence ID" value="NC_007404.1"/>
</dbReference>
<dbReference type="SMR" id="Q3SF60"/>
<dbReference type="STRING" id="292415.Tbd_2803"/>
<dbReference type="KEGG" id="tbd:Tbd_2803"/>
<dbReference type="eggNOG" id="COG0356">
    <property type="taxonomic scope" value="Bacteria"/>
</dbReference>
<dbReference type="HOGENOM" id="CLU_041018_1_0_4"/>
<dbReference type="OrthoDB" id="9789241at2"/>
<dbReference type="Proteomes" id="UP000008291">
    <property type="component" value="Chromosome"/>
</dbReference>
<dbReference type="GO" id="GO:0005886">
    <property type="term" value="C:plasma membrane"/>
    <property type="evidence" value="ECO:0007669"/>
    <property type="project" value="UniProtKB-SubCell"/>
</dbReference>
<dbReference type="GO" id="GO:0045259">
    <property type="term" value="C:proton-transporting ATP synthase complex"/>
    <property type="evidence" value="ECO:0007669"/>
    <property type="project" value="UniProtKB-KW"/>
</dbReference>
<dbReference type="GO" id="GO:0046933">
    <property type="term" value="F:proton-transporting ATP synthase activity, rotational mechanism"/>
    <property type="evidence" value="ECO:0007669"/>
    <property type="project" value="UniProtKB-UniRule"/>
</dbReference>
<dbReference type="GO" id="GO:0042777">
    <property type="term" value="P:proton motive force-driven plasma membrane ATP synthesis"/>
    <property type="evidence" value="ECO:0007669"/>
    <property type="project" value="TreeGrafter"/>
</dbReference>
<dbReference type="CDD" id="cd00310">
    <property type="entry name" value="ATP-synt_Fo_a_6"/>
    <property type="match status" value="1"/>
</dbReference>
<dbReference type="FunFam" id="1.20.120.220:FF:000002">
    <property type="entry name" value="ATP synthase subunit a"/>
    <property type="match status" value="1"/>
</dbReference>
<dbReference type="Gene3D" id="1.20.120.220">
    <property type="entry name" value="ATP synthase, F0 complex, subunit A"/>
    <property type="match status" value="1"/>
</dbReference>
<dbReference type="HAMAP" id="MF_01393">
    <property type="entry name" value="ATP_synth_a_bact"/>
    <property type="match status" value="1"/>
</dbReference>
<dbReference type="InterPro" id="IPR045082">
    <property type="entry name" value="ATP_syn_F0_a_bact/chloroplast"/>
</dbReference>
<dbReference type="InterPro" id="IPR000568">
    <property type="entry name" value="ATP_synth_F0_asu"/>
</dbReference>
<dbReference type="InterPro" id="IPR023011">
    <property type="entry name" value="ATP_synth_F0_asu_AS"/>
</dbReference>
<dbReference type="InterPro" id="IPR035908">
    <property type="entry name" value="F0_ATP_A_sf"/>
</dbReference>
<dbReference type="NCBIfam" id="TIGR01131">
    <property type="entry name" value="ATP_synt_6_or_A"/>
    <property type="match status" value="1"/>
</dbReference>
<dbReference type="NCBIfam" id="NF004477">
    <property type="entry name" value="PRK05815.1-1"/>
    <property type="match status" value="1"/>
</dbReference>
<dbReference type="PANTHER" id="PTHR42823">
    <property type="entry name" value="ATP SYNTHASE SUBUNIT A, CHLOROPLASTIC"/>
    <property type="match status" value="1"/>
</dbReference>
<dbReference type="PANTHER" id="PTHR42823:SF3">
    <property type="entry name" value="ATP SYNTHASE SUBUNIT A, CHLOROPLASTIC"/>
    <property type="match status" value="1"/>
</dbReference>
<dbReference type="Pfam" id="PF00119">
    <property type="entry name" value="ATP-synt_A"/>
    <property type="match status" value="1"/>
</dbReference>
<dbReference type="PRINTS" id="PR00123">
    <property type="entry name" value="ATPASEA"/>
</dbReference>
<dbReference type="SUPFAM" id="SSF81336">
    <property type="entry name" value="F1F0 ATP synthase subunit A"/>
    <property type="match status" value="1"/>
</dbReference>
<dbReference type="PROSITE" id="PS00449">
    <property type="entry name" value="ATPASE_A"/>
    <property type="match status" value="1"/>
</dbReference>